<feature type="chain" id="PRO_1000044913" description="Putative double-stranded DNA mimic protein YciU">
    <location>
        <begin position="1"/>
        <end position="109"/>
    </location>
</feature>
<dbReference type="EMBL" id="AE017220">
    <property type="protein sequence ID" value="AAX65642.1"/>
    <property type="molecule type" value="Genomic_DNA"/>
</dbReference>
<dbReference type="RefSeq" id="WP_000425070.1">
    <property type="nucleotide sequence ID" value="NC_006905.1"/>
</dbReference>
<dbReference type="SMR" id="Q57NR9"/>
<dbReference type="KEGG" id="sec:SCH_1736"/>
<dbReference type="HOGENOM" id="CLU_143392_0_0_6"/>
<dbReference type="Proteomes" id="UP000000538">
    <property type="component" value="Chromosome"/>
</dbReference>
<dbReference type="Gene3D" id="3.10.450.140">
    <property type="entry name" value="dsDNA mimic, putative"/>
    <property type="match status" value="1"/>
</dbReference>
<dbReference type="HAMAP" id="MF_00680">
    <property type="entry name" value="Put_dsDNA_mimic"/>
    <property type="match status" value="1"/>
</dbReference>
<dbReference type="InterPro" id="IPR007376">
    <property type="entry name" value="dsDNA_mimic_put"/>
</dbReference>
<dbReference type="InterPro" id="IPR036763">
    <property type="entry name" value="Put_dsDNA_mimic_sf"/>
</dbReference>
<dbReference type="NCBIfam" id="NF003469">
    <property type="entry name" value="PRK05094.1"/>
    <property type="match status" value="1"/>
</dbReference>
<dbReference type="Pfam" id="PF04269">
    <property type="entry name" value="DUF440"/>
    <property type="match status" value="1"/>
</dbReference>
<dbReference type="PIRSF" id="PIRSF004916">
    <property type="entry name" value="UCP004916"/>
    <property type="match status" value="1"/>
</dbReference>
<dbReference type="SUPFAM" id="SSF102816">
    <property type="entry name" value="Putative dsDNA mimic"/>
    <property type="match status" value="1"/>
</dbReference>
<sequence>MEMDLNNRLTEDETLEQAYDIFLELAADNLDPADIILFNLQFEERGGAELFDPAEDWQEHVDFDLNPDFFAEVVIGLADTEDGEINDIFARVLLCREKDHKLCHILWRE</sequence>
<protein>
    <recommendedName>
        <fullName evidence="1">Putative double-stranded DNA mimic protein YciU</fullName>
    </recommendedName>
</protein>
<proteinExistence type="inferred from homology"/>
<comment type="function">
    <text evidence="1">May act as a double-stranded DNA (dsDNA) mimic. Probably regulates the activity of a dsDNA-binding protein.</text>
</comment>
<comment type="similarity">
    <text evidence="1">Belongs to the putative dsDNA mimic protein family.</text>
</comment>
<evidence type="ECO:0000255" key="1">
    <source>
        <dbReference type="HAMAP-Rule" id="MF_00680"/>
    </source>
</evidence>
<name>YCIU_SALCH</name>
<accession>Q57NR9</accession>
<gene>
    <name evidence="1" type="primary">yciU</name>
    <name type="ordered locus">SCH_1736</name>
</gene>
<reference key="1">
    <citation type="journal article" date="2005" name="Nucleic Acids Res.">
        <title>The genome sequence of Salmonella enterica serovar Choleraesuis, a highly invasive and resistant zoonotic pathogen.</title>
        <authorList>
            <person name="Chiu C.-H."/>
            <person name="Tang P."/>
            <person name="Chu C."/>
            <person name="Hu S."/>
            <person name="Bao Q."/>
            <person name="Yu J."/>
            <person name="Chou Y.-Y."/>
            <person name="Wang H.-S."/>
            <person name="Lee Y.-S."/>
        </authorList>
    </citation>
    <scope>NUCLEOTIDE SEQUENCE [LARGE SCALE GENOMIC DNA]</scope>
    <source>
        <strain>SC-B67</strain>
    </source>
</reference>
<organism>
    <name type="scientific">Salmonella choleraesuis (strain SC-B67)</name>
    <dbReference type="NCBI Taxonomy" id="321314"/>
    <lineage>
        <taxon>Bacteria</taxon>
        <taxon>Pseudomonadati</taxon>
        <taxon>Pseudomonadota</taxon>
        <taxon>Gammaproteobacteria</taxon>
        <taxon>Enterobacterales</taxon>
        <taxon>Enterobacteriaceae</taxon>
        <taxon>Salmonella</taxon>
    </lineage>
</organism>